<feature type="chain" id="PRO_0000366794" description="Ribosomal RNA large subunit methyltransferase K/L">
    <location>
        <begin position="1"/>
        <end position="730"/>
    </location>
</feature>
<feature type="domain" description="THUMP" evidence="1">
    <location>
        <begin position="46"/>
        <end position="157"/>
    </location>
</feature>
<comment type="function">
    <text evidence="1">Specifically methylates the guanine in position 2445 (m2G2445) and the guanine in position 2069 (m7G2069) of 23S rRNA.</text>
</comment>
<comment type="catalytic activity">
    <reaction evidence="1">
        <text>guanosine(2445) in 23S rRNA + S-adenosyl-L-methionine = N(2)-methylguanosine(2445) in 23S rRNA + S-adenosyl-L-homocysteine + H(+)</text>
        <dbReference type="Rhea" id="RHEA:42740"/>
        <dbReference type="Rhea" id="RHEA-COMP:10215"/>
        <dbReference type="Rhea" id="RHEA-COMP:10216"/>
        <dbReference type="ChEBI" id="CHEBI:15378"/>
        <dbReference type="ChEBI" id="CHEBI:57856"/>
        <dbReference type="ChEBI" id="CHEBI:59789"/>
        <dbReference type="ChEBI" id="CHEBI:74269"/>
        <dbReference type="ChEBI" id="CHEBI:74481"/>
        <dbReference type="EC" id="2.1.1.173"/>
    </reaction>
</comment>
<comment type="catalytic activity">
    <reaction evidence="1">
        <text>guanosine(2069) in 23S rRNA + S-adenosyl-L-methionine = N(2)-methylguanosine(2069) in 23S rRNA + S-adenosyl-L-homocysteine + H(+)</text>
        <dbReference type="Rhea" id="RHEA:43772"/>
        <dbReference type="Rhea" id="RHEA-COMP:10688"/>
        <dbReference type="Rhea" id="RHEA-COMP:10689"/>
        <dbReference type="ChEBI" id="CHEBI:15378"/>
        <dbReference type="ChEBI" id="CHEBI:57856"/>
        <dbReference type="ChEBI" id="CHEBI:59789"/>
        <dbReference type="ChEBI" id="CHEBI:74269"/>
        <dbReference type="ChEBI" id="CHEBI:74481"/>
        <dbReference type="EC" id="2.1.1.264"/>
    </reaction>
</comment>
<comment type="subcellular location">
    <subcellularLocation>
        <location evidence="1">Cytoplasm</location>
    </subcellularLocation>
</comment>
<comment type="similarity">
    <text evidence="1">Belongs to the methyltransferase superfamily. RlmKL family.</text>
</comment>
<name>RLMKL_PSEPW</name>
<sequence>MSDRFELYLTCPKGLEGLLAEEAKGLGLDDVREHTSAIRGAADMETAYRLCLWSRLANRVLLVLKRFNMKNADDLYDGVNAVDWADHLAADGTLAVEFSGHGSGIDNTHFGALKVKDAIVDKLRNREGLRPSVEKVDPDVRVHLRLDRGEAILSLDLSGHSLHQRGYRLQQGAAPLKENLAAAVLIRAGWPRIAAEGGALADPMCGVGTFLVEAAMIAADMAPNLKRERWGFSAWLGHVPATWRKVHEEAQARAQAGLAKPPLWIRGYEADPRLIQPGRNNVERAGLSEWVKIYQGEVASFEPRPDQNQKGLVISNPPYGERLGDEASLLYLYQNLGERLRQACMGWEAAVFTGAPELGKRMGIRSHKQYAFWNGALPCKLLLFKIQPDQFVTGERREAQADSGDTHRPLPVASEPARLSEGAQMFANRLQKNLKQLGKWARKEQIDCYRVYDADMPEYALAVDLYQDWVHVQEYAAPRSIDPEKAQARLIDALSAIPQALGVDPQRVVLKRRERQSGTRQYERQATEGRFQEVSEGGVRLLVNLTDYLDTGLFLDHRPMRMRIQREAAGKRFLNLFCYTATASVHAAKGGARSTTSVDLSKTYLDWARRNLSLNGFSERNRLEQGDVMAWLEANRDTYDLIFIDPPTFSNSKRMEGVFDVQRDHVQLLDLAMARLAPGGVLYFSNNFRKFQLDEHLAARYVVEEITAQTLDPDFARNNRIHRAWRLQLR</sequence>
<dbReference type="EC" id="2.1.1.173" evidence="1"/>
<dbReference type="EC" id="2.1.1.264" evidence="1"/>
<dbReference type="EMBL" id="CP000949">
    <property type="protein sequence ID" value="ACA72120.1"/>
    <property type="molecule type" value="Genomic_DNA"/>
</dbReference>
<dbReference type="SMR" id="B1J5B7"/>
<dbReference type="STRING" id="390235.PputW619_1615"/>
<dbReference type="KEGG" id="ppw:PputW619_1615"/>
<dbReference type="eggNOG" id="COG0116">
    <property type="taxonomic scope" value="Bacteria"/>
</dbReference>
<dbReference type="eggNOG" id="COG1092">
    <property type="taxonomic scope" value="Bacteria"/>
</dbReference>
<dbReference type="HOGENOM" id="CLU_014042_2_0_6"/>
<dbReference type="OrthoDB" id="9809404at2"/>
<dbReference type="GO" id="GO:0005737">
    <property type="term" value="C:cytoplasm"/>
    <property type="evidence" value="ECO:0007669"/>
    <property type="project" value="UniProtKB-SubCell"/>
</dbReference>
<dbReference type="GO" id="GO:0052915">
    <property type="term" value="F:23S rRNA (guanine(2445)-N(2))-methyltransferase activity"/>
    <property type="evidence" value="ECO:0007669"/>
    <property type="project" value="UniProtKB-UniRule"/>
</dbReference>
<dbReference type="GO" id="GO:0003723">
    <property type="term" value="F:RNA binding"/>
    <property type="evidence" value="ECO:0007669"/>
    <property type="project" value="UniProtKB-KW"/>
</dbReference>
<dbReference type="GO" id="GO:0070043">
    <property type="term" value="F:rRNA (guanine-N7-)-methyltransferase activity"/>
    <property type="evidence" value="ECO:0007669"/>
    <property type="project" value="UniProtKB-UniRule"/>
</dbReference>
<dbReference type="CDD" id="cd02440">
    <property type="entry name" value="AdoMet_MTases"/>
    <property type="match status" value="1"/>
</dbReference>
<dbReference type="CDD" id="cd11715">
    <property type="entry name" value="THUMP_AdoMetMT"/>
    <property type="match status" value="1"/>
</dbReference>
<dbReference type="Gene3D" id="3.30.2130.30">
    <property type="match status" value="1"/>
</dbReference>
<dbReference type="Gene3D" id="3.30.750.80">
    <property type="entry name" value="RNA methyltransferase domain (HRMD) like"/>
    <property type="match status" value="1"/>
</dbReference>
<dbReference type="Gene3D" id="3.40.50.150">
    <property type="entry name" value="Vaccinia Virus protein VP39"/>
    <property type="match status" value="2"/>
</dbReference>
<dbReference type="HAMAP" id="MF_01858">
    <property type="entry name" value="23SrRNA_methyltr_KL"/>
    <property type="match status" value="1"/>
</dbReference>
<dbReference type="InterPro" id="IPR017244">
    <property type="entry name" value="23SrRNA_methyltr_KL"/>
</dbReference>
<dbReference type="InterPro" id="IPR002052">
    <property type="entry name" value="DNA_methylase_N6_adenine_CS"/>
</dbReference>
<dbReference type="InterPro" id="IPR000241">
    <property type="entry name" value="RlmKL-like_Mtase"/>
</dbReference>
<dbReference type="InterPro" id="IPR054170">
    <property type="entry name" value="RlmL_1st"/>
</dbReference>
<dbReference type="InterPro" id="IPR019614">
    <property type="entry name" value="SAM-dep_methyl-trfase"/>
</dbReference>
<dbReference type="InterPro" id="IPR029063">
    <property type="entry name" value="SAM-dependent_MTases_sf"/>
</dbReference>
<dbReference type="InterPro" id="IPR004114">
    <property type="entry name" value="THUMP_dom"/>
</dbReference>
<dbReference type="NCBIfam" id="NF008748">
    <property type="entry name" value="PRK11783.1"/>
    <property type="match status" value="1"/>
</dbReference>
<dbReference type="PANTHER" id="PTHR47313">
    <property type="entry name" value="RIBOSOMAL RNA LARGE SUBUNIT METHYLTRANSFERASE K/L"/>
    <property type="match status" value="1"/>
</dbReference>
<dbReference type="PANTHER" id="PTHR47313:SF1">
    <property type="entry name" value="RIBOSOMAL RNA LARGE SUBUNIT METHYLTRANSFERASE K_L"/>
    <property type="match status" value="1"/>
</dbReference>
<dbReference type="Pfam" id="PF10672">
    <property type="entry name" value="Methyltrans_SAM"/>
    <property type="match status" value="1"/>
</dbReference>
<dbReference type="Pfam" id="PF22020">
    <property type="entry name" value="RlmL_1st"/>
    <property type="match status" value="1"/>
</dbReference>
<dbReference type="Pfam" id="PF02926">
    <property type="entry name" value="THUMP"/>
    <property type="match status" value="1"/>
</dbReference>
<dbReference type="Pfam" id="PF01170">
    <property type="entry name" value="UPF0020"/>
    <property type="match status" value="1"/>
</dbReference>
<dbReference type="PIRSF" id="PIRSF037618">
    <property type="entry name" value="RNA_Mtase_bacteria_prd"/>
    <property type="match status" value="1"/>
</dbReference>
<dbReference type="SMART" id="SM00981">
    <property type="entry name" value="THUMP"/>
    <property type="match status" value="1"/>
</dbReference>
<dbReference type="SUPFAM" id="SSF53335">
    <property type="entry name" value="S-adenosyl-L-methionine-dependent methyltransferases"/>
    <property type="match status" value="2"/>
</dbReference>
<dbReference type="PROSITE" id="PS51165">
    <property type="entry name" value="THUMP"/>
    <property type="match status" value="1"/>
</dbReference>
<protein>
    <recommendedName>
        <fullName evidence="1">Ribosomal RNA large subunit methyltransferase K/L</fullName>
    </recommendedName>
    <domain>
        <recommendedName>
            <fullName evidence="1">23S rRNA m2G2445 methyltransferase</fullName>
            <ecNumber evidence="1">2.1.1.173</ecNumber>
        </recommendedName>
        <alternativeName>
            <fullName evidence="1">rRNA (guanine-N(2)-)-methyltransferase RlmL</fullName>
        </alternativeName>
    </domain>
    <domain>
        <recommendedName>
            <fullName evidence="1">23S rRNA m7G2069 methyltransferase</fullName>
            <ecNumber evidence="1">2.1.1.264</ecNumber>
        </recommendedName>
        <alternativeName>
            <fullName evidence="1">rRNA (guanine-N(7)-)-methyltransferase RlmK</fullName>
        </alternativeName>
    </domain>
</protein>
<gene>
    <name evidence="1" type="primary">rlmL</name>
    <name type="ordered locus">PputW619_1615</name>
</gene>
<keyword id="KW-0963">Cytoplasm</keyword>
<keyword id="KW-0489">Methyltransferase</keyword>
<keyword id="KW-0694">RNA-binding</keyword>
<keyword id="KW-0698">rRNA processing</keyword>
<keyword id="KW-0949">S-adenosyl-L-methionine</keyword>
<keyword id="KW-0808">Transferase</keyword>
<evidence type="ECO:0000255" key="1">
    <source>
        <dbReference type="HAMAP-Rule" id="MF_01858"/>
    </source>
</evidence>
<accession>B1J5B7</accession>
<organism>
    <name type="scientific">Pseudomonas putida (strain W619)</name>
    <dbReference type="NCBI Taxonomy" id="390235"/>
    <lineage>
        <taxon>Bacteria</taxon>
        <taxon>Pseudomonadati</taxon>
        <taxon>Pseudomonadota</taxon>
        <taxon>Gammaproteobacteria</taxon>
        <taxon>Pseudomonadales</taxon>
        <taxon>Pseudomonadaceae</taxon>
        <taxon>Pseudomonas</taxon>
    </lineage>
</organism>
<reference key="1">
    <citation type="submission" date="2008-02" db="EMBL/GenBank/DDBJ databases">
        <title>Complete sequence of Pseudomonas putida W619.</title>
        <authorList>
            <person name="Copeland A."/>
            <person name="Lucas S."/>
            <person name="Lapidus A."/>
            <person name="Barry K."/>
            <person name="Detter J.C."/>
            <person name="Glavina del Rio T."/>
            <person name="Dalin E."/>
            <person name="Tice H."/>
            <person name="Pitluck S."/>
            <person name="Chain P."/>
            <person name="Malfatti S."/>
            <person name="Shin M."/>
            <person name="Vergez L."/>
            <person name="Schmutz J."/>
            <person name="Larimer F."/>
            <person name="Land M."/>
            <person name="Hauser L."/>
            <person name="Kyrpides N."/>
            <person name="Kim E."/>
            <person name="Taghavi S."/>
            <person name="Vangronsveld D."/>
            <person name="van der Lelie D."/>
            <person name="Richardson P."/>
        </authorList>
    </citation>
    <scope>NUCLEOTIDE SEQUENCE [LARGE SCALE GENOMIC DNA]</scope>
    <source>
        <strain>W619</strain>
    </source>
</reference>
<proteinExistence type="inferred from homology"/>